<organism>
    <name type="scientific">Uukuniemi virus (strain S23)</name>
    <name type="common">UUKV</name>
    <dbReference type="NCBI Taxonomy" id="487099"/>
    <lineage>
        <taxon>Viruses</taxon>
        <taxon>Riboviria</taxon>
        <taxon>Orthornavirae</taxon>
        <taxon>Negarnaviricota</taxon>
        <taxon>Polyploviricotina</taxon>
        <taxon>Ellioviricetes</taxon>
        <taxon>Bunyavirales</taxon>
        <taxon>Phenuiviridae</taxon>
        <taxon>Phlebovirus</taxon>
        <taxon>Uukuniemi phlebovirus</taxon>
    </lineage>
</organism>
<reference key="1">
    <citation type="journal article" date="1990" name="J. Virol.">
        <title>Uukuniemi virus S RNA segment: ambisense coding strategy, packaging of complementary strands into virions, and homology to members of the genus Phlebovirus.</title>
        <authorList>
            <person name="Simons J.F."/>
            <person name="Hellman U."/>
            <person name="Pettersson R.F."/>
        </authorList>
    </citation>
    <scope>NUCLEOTIDE SEQUENCE [GENOMIC RNA]</scope>
</reference>
<sequence length="254" mass="28508">MAMPENWVRFAIEISDAQWEEEEIREFINLFQYQGFDAAVVLSRIFELAKKADLSRDQMLRDIRALITLHLTRGNKLSSIEKRLSEEGKKEFALLKARYQLVDKAKEAADLTLSRIAIANAGLTCRILPQVVAHTAVTRSRMESLSADYPVCMMHNAFAGLIDETLPEDSIKALVDAHRLYLLEFSRTINVKHRGMEAKEILDANDSALQAGLASSFLTPSQKRAYLLSFKLVDGNGKVNKAVQQAATVLRSLI</sequence>
<organismHost>
    <name type="scientific">Homo sapiens</name>
    <name type="common">Human</name>
    <dbReference type="NCBI Taxonomy" id="9606"/>
</organismHost>
<organismHost>
    <name type="scientific">Ixodes ricinus</name>
    <name type="common">Common tick</name>
    <name type="synonym">Acarus ricinus</name>
    <dbReference type="NCBI Taxonomy" id="34613"/>
</organismHost>
<feature type="chain" id="PRO_0000221998" description="Nucleoprotein">
    <location>
        <begin position="1"/>
        <end position="254"/>
    </location>
</feature>
<feature type="binding site" evidence="4">
    <location>
        <position position="33"/>
    </location>
    <ligand>
        <name>RNA</name>
        <dbReference type="ChEBI" id="CHEBI:33697"/>
    </ligand>
</feature>
<feature type="binding site" evidence="4">
    <location>
        <position position="36"/>
    </location>
    <ligand>
        <name>RNA</name>
        <dbReference type="ChEBI" id="CHEBI:33697"/>
    </ligand>
</feature>
<feature type="binding site" evidence="4">
    <location>
        <position position="76"/>
    </location>
    <ligand>
        <name>RNA</name>
        <dbReference type="ChEBI" id="CHEBI:33697"/>
    </ligand>
</feature>
<feature type="binding site" evidence="4">
    <location>
        <position position="114"/>
    </location>
    <ligand>
        <name>RNA</name>
        <dbReference type="ChEBI" id="CHEBI:33697"/>
    </ligand>
</feature>
<feature type="binding site" evidence="4">
    <location>
        <position position="115"/>
    </location>
    <ligand>
        <name>RNA</name>
        <dbReference type="ChEBI" id="CHEBI:33697"/>
    </ligand>
</feature>
<feature type="binding site" evidence="4">
    <location>
        <position position="194"/>
    </location>
    <ligand>
        <name>RNA</name>
        <dbReference type="ChEBI" id="CHEBI:33697"/>
    </ligand>
</feature>
<evidence type="ECO:0000250" key="1">
    <source>
        <dbReference type="UniProtKB" id="D3K5I7"/>
    </source>
</evidence>
<evidence type="ECO:0000250" key="2">
    <source>
        <dbReference type="UniProtKB" id="I6WJ72"/>
    </source>
</evidence>
<evidence type="ECO:0000250" key="3">
    <source>
        <dbReference type="UniProtKB" id="P21700"/>
    </source>
</evidence>
<evidence type="ECO:0000250" key="4">
    <source>
        <dbReference type="UniProtKB" id="P21701"/>
    </source>
</evidence>
<evidence type="ECO:0000305" key="5"/>
<gene>
    <name type="primary">N</name>
</gene>
<name>NCAP_UUKS</name>
<dbReference type="EMBL" id="M33551">
    <property type="protein sequence ID" value="AAA47958.1"/>
    <property type="molecule type" value="Genomic_RNA"/>
</dbReference>
<dbReference type="PIR" id="A33559">
    <property type="entry name" value="VHVUUU"/>
</dbReference>
<dbReference type="SMR" id="P22025"/>
<dbReference type="IntAct" id="P22025">
    <property type="interactions" value="1"/>
</dbReference>
<dbReference type="KEGG" id="vg:6457835"/>
<dbReference type="Proteomes" id="UP000008595">
    <property type="component" value="Genome"/>
</dbReference>
<dbReference type="GO" id="GO:0019029">
    <property type="term" value="C:helical viral capsid"/>
    <property type="evidence" value="ECO:0007669"/>
    <property type="project" value="UniProtKB-KW"/>
</dbReference>
<dbReference type="GO" id="GO:0044172">
    <property type="term" value="C:host cell endoplasmic reticulum-Golgi intermediate compartment"/>
    <property type="evidence" value="ECO:0007669"/>
    <property type="project" value="UniProtKB-SubCell"/>
</dbReference>
<dbReference type="GO" id="GO:0044177">
    <property type="term" value="C:host cell Golgi apparatus"/>
    <property type="evidence" value="ECO:0007669"/>
    <property type="project" value="UniProtKB-SubCell"/>
</dbReference>
<dbReference type="GO" id="GO:0042025">
    <property type="term" value="C:host cell nucleus"/>
    <property type="evidence" value="ECO:0007669"/>
    <property type="project" value="UniProtKB-SubCell"/>
</dbReference>
<dbReference type="GO" id="GO:1990904">
    <property type="term" value="C:ribonucleoprotein complex"/>
    <property type="evidence" value="ECO:0007669"/>
    <property type="project" value="UniProtKB-KW"/>
</dbReference>
<dbReference type="GO" id="GO:0019013">
    <property type="term" value="C:viral nucleocapsid"/>
    <property type="evidence" value="ECO:0007669"/>
    <property type="project" value="UniProtKB-KW"/>
</dbReference>
<dbReference type="GO" id="GO:0003723">
    <property type="term" value="F:RNA binding"/>
    <property type="evidence" value="ECO:0007669"/>
    <property type="project" value="UniProtKB-KW"/>
</dbReference>
<dbReference type="InterPro" id="IPR009522">
    <property type="entry name" value="Capsid_Phlebovir/Tenuivir"/>
</dbReference>
<dbReference type="InterPro" id="IPR015971">
    <property type="entry name" value="Nucleocapsid_Phlebovirus"/>
</dbReference>
<dbReference type="Pfam" id="PF05733">
    <property type="entry name" value="Tenui_N"/>
    <property type="match status" value="1"/>
</dbReference>
<dbReference type="PIRSF" id="PIRSF003953">
    <property type="entry name" value="N_PhelboV"/>
    <property type="match status" value="1"/>
</dbReference>
<proteinExistence type="inferred from homology"/>
<keyword id="KW-0167">Capsid protein</keyword>
<keyword id="KW-1139">Helical capsid protein</keyword>
<keyword id="KW-1035">Host cytoplasm</keyword>
<keyword id="KW-1040">Host Golgi apparatus</keyword>
<keyword id="KW-1048">Host nucleus</keyword>
<keyword id="KW-1185">Reference proteome</keyword>
<keyword id="KW-0687">Ribonucleoprotein</keyword>
<keyword id="KW-0694">RNA-binding</keyword>
<keyword id="KW-0543">Viral nucleoprotein</keyword>
<keyword id="KW-0946">Virion</keyword>
<comment type="function">
    <text evidence="1 3">Encapsidates the genomic RNA, protecting it from nucleases. Displays high affinity for single-stranded nucleic acid. The encapsidated genomic RNA is termed the nucleocapsid (NC) or ribonucleoprotein. The ribonucleoprotein has a non-helical structure (By similarity). Serves as template for viral transcription and replication. After replication, the nucleocapsid is recruited to the host Golgi apparatus by glycoprotein Gn for packaging into virus particles (By similarity).</text>
</comment>
<comment type="subunit">
    <text evidence="1 3 4">Homodimer. Homohexamer; ring-shaped, necessary to form the nucleocapsid (By similarity). Homopentamers; opened pentamers in solution (By similarity). Binds to viral genomic RNA (By similarity). Interacts with glycoprotein Gn; this interaction allows packaging of nucleocapsids into virions (By similarity).</text>
</comment>
<comment type="subcellular location">
    <subcellularLocation>
        <location evidence="1">Virion</location>
    </subcellularLocation>
    <subcellularLocation>
        <location evidence="1">Host cytoplasm</location>
    </subcellularLocation>
    <subcellularLocation>
        <location evidence="1">Host nucleus</location>
    </subcellularLocation>
    <subcellularLocation>
        <location evidence="2">Host endoplasmic reticulum-Golgi intermediate compartment</location>
    </subcellularLocation>
    <subcellularLocation>
        <location evidence="2">Host Golgi apparatus</location>
    </subcellularLocation>
</comment>
<comment type="domain">
    <text evidence="4">The N-terminus is involved in homooligomerization.</text>
</comment>
<comment type="similarity">
    <text evidence="5">Belongs to the phlebovirus nucleocapsid protein family.</text>
</comment>
<accession>P22025</accession>
<protein>
    <recommendedName>
        <fullName>Nucleoprotein</fullName>
    </recommendedName>
    <alternativeName>
        <fullName>Nucleocapsid protein</fullName>
        <shortName>Protein N</shortName>
    </alternativeName>
</protein>